<proteinExistence type="inferred from homology"/>
<name>NRDR_ECOSE</name>
<gene>
    <name evidence="1" type="primary">nrdR</name>
    <name type="ordered locus">ECSE_0435</name>
</gene>
<evidence type="ECO:0000255" key="1">
    <source>
        <dbReference type="HAMAP-Rule" id="MF_00440"/>
    </source>
</evidence>
<keyword id="KW-0067">ATP-binding</keyword>
<keyword id="KW-0238">DNA-binding</keyword>
<keyword id="KW-0479">Metal-binding</keyword>
<keyword id="KW-0547">Nucleotide-binding</keyword>
<keyword id="KW-0678">Repressor</keyword>
<keyword id="KW-0804">Transcription</keyword>
<keyword id="KW-0805">Transcription regulation</keyword>
<keyword id="KW-0862">Zinc</keyword>
<keyword id="KW-0863">Zinc-finger</keyword>
<comment type="function">
    <text evidence="1">Negatively regulates transcription of bacterial ribonucleotide reductase nrd genes and operons by binding to NrdR-boxes.</text>
</comment>
<comment type="cofactor">
    <cofactor evidence="1">
        <name>Zn(2+)</name>
        <dbReference type="ChEBI" id="CHEBI:29105"/>
    </cofactor>
    <text evidence="1">Binds 1 zinc ion.</text>
</comment>
<comment type="similarity">
    <text evidence="1">Belongs to the NrdR family.</text>
</comment>
<dbReference type="EMBL" id="AP009240">
    <property type="protein sequence ID" value="BAG75959.1"/>
    <property type="molecule type" value="Genomic_DNA"/>
</dbReference>
<dbReference type="RefSeq" id="WP_000543535.1">
    <property type="nucleotide sequence ID" value="NC_011415.1"/>
</dbReference>
<dbReference type="SMR" id="B6HZL4"/>
<dbReference type="GeneID" id="93777047"/>
<dbReference type="KEGG" id="ecy:ECSE_0435"/>
<dbReference type="HOGENOM" id="CLU_108412_0_0_6"/>
<dbReference type="Proteomes" id="UP000008199">
    <property type="component" value="Chromosome"/>
</dbReference>
<dbReference type="GO" id="GO:0005524">
    <property type="term" value="F:ATP binding"/>
    <property type="evidence" value="ECO:0007669"/>
    <property type="project" value="UniProtKB-KW"/>
</dbReference>
<dbReference type="GO" id="GO:0003677">
    <property type="term" value="F:DNA binding"/>
    <property type="evidence" value="ECO:0007669"/>
    <property type="project" value="UniProtKB-KW"/>
</dbReference>
<dbReference type="GO" id="GO:0008270">
    <property type="term" value="F:zinc ion binding"/>
    <property type="evidence" value="ECO:0007669"/>
    <property type="project" value="UniProtKB-UniRule"/>
</dbReference>
<dbReference type="GO" id="GO:0045892">
    <property type="term" value="P:negative regulation of DNA-templated transcription"/>
    <property type="evidence" value="ECO:0007669"/>
    <property type="project" value="UniProtKB-UniRule"/>
</dbReference>
<dbReference type="HAMAP" id="MF_00440">
    <property type="entry name" value="NrdR"/>
    <property type="match status" value="1"/>
</dbReference>
<dbReference type="InterPro" id="IPR005144">
    <property type="entry name" value="ATP-cone_dom"/>
</dbReference>
<dbReference type="InterPro" id="IPR055173">
    <property type="entry name" value="NrdR-like_N"/>
</dbReference>
<dbReference type="InterPro" id="IPR003796">
    <property type="entry name" value="RNR_NrdR-like"/>
</dbReference>
<dbReference type="NCBIfam" id="TIGR00244">
    <property type="entry name" value="transcriptional regulator NrdR"/>
    <property type="match status" value="1"/>
</dbReference>
<dbReference type="PANTHER" id="PTHR30455">
    <property type="entry name" value="TRANSCRIPTIONAL REPRESSOR NRDR"/>
    <property type="match status" value="1"/>
</dbReference>
<dbReference type="PANTHER" id="PTHR30455:SF2">
    <property type="entry name" value="TRANSCRIPTIONAL REPRESSOR NRDR"/>
    <property type="match status" value="1"/>
</dbReference>
<dbReference type="Pfam" id="PF03477">
    <property type="entry name" value="ATP-cone"/>
    <property type="match status" value="1"/>
</dbReference>
<dbReference type="Pfam" id="PF22811">
    <property type="entry name" value="Zn_ribbon_NrdR"/>
    <property type="match status" value="1"/>
</dbReference>
<dbReference type="PROSITE" id="PS51161">
    <property type="entry name" value="ATP_CONE"/>
    <property type="match status" value="1"/>
</dbReference>
<protein>
    <recommendedName>
        <fullName evidence="1">Transcriptional repressor NrdR</fullName>
    </recommendedName>
</protein>
<feature type="chain" id="PRO_1000124504" description="Transcriptional repressor NrdR">
    <location>
        <begin position="1"/>
        <end position="149"/>
    </location>
</feature>
<feature type="domain" description="ATP-cone" evidence="1">
    <location>
        <begin position="49"/>
        <end position="139"/>
    </location>
</feature>
<feature type="zinc finger region" evidence="1">
    <location>
        <begin position="3"/>
        <end position="34"/>
    </location>
</feature>
<sequence>MHCPFCFAVDTKVIDSRLVGEGSSVRRRRQCLVCNERFTTFEVAELVMPRVVKSNDVREPFNEEKLRSGMLRALEKRPVSSDDVEMAINHIKSQLRATGEREVPSKMIGNLVMEQLKKLDKVAYIRFASVYRSFEDIKEFGEEIARLED</sequence>
<accession>B6HZL4</accession>
<reference key="1">
    <citation type="journal article" date="2008" name="DNA Res.">
        <title>Complete genome sequence and comparative analysis of the wild-type commensal Escherichia coli strain SE11 isolated from a healthy adult.</title>
        <authorList>
            <person name="Oshima K."/>
            <person name="Toh H."/>
            <person name="Ogura Y."/>
            <person name="Sasamoto H."/>
            <person name="Morita H."/>
            <person name="Park S.-H."/>
            <person name="Ooka T."/>
            <person name="Iyoda S."/>
            <person name="Taylor T.D."/>
            <person name="Hayashi T."/>
            <person name="Itoh K."/>
            <person name="Hattori M."/>
        </authorList>
    </citation>
    <scope>NUCLEOTIDE SEQUENCE [LARGE SCALE GENOMIC DNA]</scope>
    <source>
        <strain>SE11</strain>
    </source>
</reference>
<organism>
    <name type="scientific">Escherichia coli (strain SE11)</name>
    <dbReference type="NCBI Taxonomy" id="409438"/>
    <lineage>
        <taxon>Bacteria</taxon>
        <taxon>Pseudomonadati</taxon>
        <taxon>Pseudomonadota</taxon>
        <taxon>Gammaproteobacteria</taxon>
        <taxon>Enterobacterales</taxon>
        <taxon>Enterobacteriaceae</taxon>
        <taxon>Escherichia</taxon>
    </lineage>
</organism>